<reference key="1">
    <citation type="journal article" date="2020" name="Nature">
        <title>A new coronavirus associated with human respiratory disease in China.</title>
        <authorList>
            <person name="Wu F."/>
            <person name="Zhao S."/>
            <person name="Yu B."/>
            <person name="Chen Y.-M."/>
            <person name="Wang W."/>
            <person name="Song Z.-G."/>
            <person name="Hu Y."/>
            <person name="Tao Z.-W."/>
            <person name="Tian J.-H."/>
            <person name="Pei Y.-Y."/>
            <person name="Yuan M.-L."/>
            <person name="Zhang Y.-L."/>
            <person name="Dai F.-H."/>
            <person name="Liu Y."/>
            <person name="Wang Q.-M."/>
            <person name="Zheng J.-J."/>
            <person name="Xu L."/>
            <person name="Holmes E.C."/>
            <person name="Zhang Y.-Z."/>
        </authorList>
    </citation>
    <scope>NUCLEOTIDE SEQUENCE [GENOMIC RNA]</scope>
</reference>
<reference key="2">
    <citation type="journal article" date="2020" name="Virol. J.">
        <title>Characterization of accessory genes in coronavirus genomes.</title>
        <authorList>
            <person name="Michel C.J."/>
            <person name="Mayer C."/>
            <person name="Poch O."/>
            <person name="Thompson J.D."/>
        </authorList>
    </citation>
    <scope>CONCEPTUAL TRANSLATION</scope>
</reference>
<reference key="3">
    <citation type="journal article" date="2021" name="Nat. Commun.">
        <title>SARS-CoV-2 gene content and COVID-19 mutation impact by comparing 44 Sarbecovirus genomes.</title>
        <authorList>
            <person name="Jungreis I."/>
            <person name="Sealfon R."/>
            <person name="Kellis M."/>
        </authorList>
    </citation>
    <scope>GENOME REANNOTATION</scope>
</reference>
<reference key="4">
    <citation type="journal article" date="2022" name="Stem Cell Reports">
        <title>Genome-wide analyses reveal the detrimental impacts of SARS-CoV-2 viral gene Orf9c on human pluripotent stem cell-derived cardiomyocytes.</title>
        <authorList>
            <person name="Liu J."/>
            <person name="Zhang Y."/>
            <person name="Han L."/>
            <person name="Guo S."/>
            <person name="Wu S."/>
            <person name="Doud E.H."/>
            <person name="Wang C."/>
            <person name="Chen H."/>
            <person name="Rubart-von der Lohe M."/>
            <person name="Wan J."/>
            <person name="Yang L."/>
        </authorList>
    </citation>
    <scope>FUNCTION</scope>
</reference>
<protein>
    <recommendedName>
        <fullName evidence="5">Putative ORF9c protein</fullName>
        <shortName>ORF9c</shortName>
    </recommendedName>
    <alternativeName>
        <fullName>Uncharacterized protein 14</fullName>
        <shortName>ORF14</shortName>
    </alternativeName>
</protein>
<organismHost>
    <name type="scientific">Homo sapiens</name>
    <name type="common">Human</name>
    <dbReference type="NCBI Taxonomy" id="9606"/>
</organismHost>
<feature type="chain" id="PRO_0000449658" description="Putative ORF9c protein">
    <location>
        <begin position="1"/>
        <end position="73"/>
    </location>
</feature>
<feature type="transmembrane region" description="Helical" evidence="1">
    <location>
        <begin position="47"/>
        <end position="67"/>
    </location>
</feature>
<feature type="sequence variant" description="In strain: Gamma." evidence="4">
    <original>V</original>
    <variation>L</variation>
    <location>
        <position position="49"/>
    </location>
</feature>
<feature type="sequence variant" description="In strain: Alpha/B.1.1.7, Gamma/P.1, Omicron/BA.1, Omicron/BA.2, Omicron/BA.2.12.2, Omicron/BA.4, Omicron BA.5." evidence="4">
    <original>G</original>
    <variation>N</variation>
    <location>
        <position position="50"/>
    </location>
</feature>
<feature type="sequence variant" description="In strain: Delta/B.1.617.2." evidence="4">
    <original>G</original>
    <variation>W</variation>
    <location>
        <position position="50"/>
    </location>
</feature>
<feature type="sequence variant" description="In strain: Beta/B.1.351." evidence="4">
    <original>L</original>
    <variation>F</variation>
    <location>
        <position position="52"/>
    </location>
</feature>
<accession>P0DTD3</accession>
<sequence length="73" mass="8050">MLQSCYNFLKEQHCQKASTQKGAEAAVKPLLVPHHVVATVQEIQLQAAVGELLLLEWLAMAVMLLLLCCCLTD</sequence>
<organism>
    <name type="scientific">Severe acute respiratory syndrome coronavirus 2</name>
    <name type="common">2019-nCoV</name>
    <name type="synonym">SARS-CoV-2</name>
    <dbReference type="NCBI Taxonomy" id="2697049"/>
    <lineage>
        <taxon>Viruses</taxon>
        <taxon>Riboviria</taxon>
        <taxon>Orthornavirae</taxon>
        <taxon>Pisuviricota</taxon>
        <taxon>Pisoniviricetes</taxon>
        <taxon>Nidovirales</taxon>
        <taxon>Cornidovirineae</taxon>
        <taxon>Coronaviridae</taxon>
        <taxon>Orthocoronavirinae</taxon>
        <taxon>Betacoronavirus</taxon>
        <taxon>Sarbecovirus</taxon>
        <taxon>Severe acute respiratory syndrome coronavirus</taxon>
    </lineage>
</organism>
<gene>
    <name type="ORF">9c</name>
</gene>
<dbReference type="EMBL" id="MN908947">
    <property type="status" value="NOT_ANNOTATED_CDS"/>
    <property type="molecule type" value="Genomic_RNA"/>
</dbReference>
<dbReference type="BioGRID" id="4383954">
    <property type="interactions" value="514"/>
</dbReference>
<dbReference type="FunCoup" id="P0DTD3">
    <property type="interactions" value="74"/>
</dbReference>
<dbReference type="IntAct" id="P0DTD3">
    <property type="interactions" value="126"/>
</dbReference>
<dbReference type="MINT" id="P0DTD3"/>
<dbReference type="AGR" id="RefSeq:P0DTD3"/>
<dbReference type="PRO" id="PR:P0DTD3"/>
<dbReference type="Proteomes" id="UP000464024">
    <property type="component" value="Genome"/>
</dbReference>
<dbReference type="GO" id="GO:0016020">
    <property type="term" value="C:membrane"/>
    <property type="evidence" value="ECO:0007669"/>
    <property type="project" value="UniProtKB-SubCell"/>
</dbReference>
<dbReference type="InterPro" id="IPR035113">
    <property type="entry name" value="Protein_14_SARS-like"/>
</dbReference>
<dbReference type="Pfam" id="PF17635">
    <property type="entry name" value="bCoV_Orf14"/>
    <property type="match status" value="1"/>
</dbReference>
<name>ORF9C_SARS2</name>
<keyword id="KW-0472">Membrane</keyword>
<keyword id="KW-1185">Reference proteome</keyword>
<keyword id="KW-0812">Transmembrane</keyword>
<keyword id="KW-1133">Transmembrane helix</keyword>
<proteinExistence type="uncertain"/>
<comment type="function">
    <text evidence="2">May induce apoptosis in cardiomyocytes when overexpressed ex-vivo.</text>
</comment>
<comment type="interaction">
    <interactant intactId="EBI-25475917">
        <id>P0DTD3</id>
    </interactant>
    <interactant intactId="EBI-2868909">
        <id>Q9H3K2</id>
        <label>GHITM</label>
    </interactant>
    <organismsDiffer>true</organismsDiffer>
    <experiments>3</experiments>
</comment>
<comment type="interaction">
    <interactant intactId="EBI-25475917">
        <id>P0DTD3</id>
    </interactant>
    <interactant intactId="EBI-10192441">
        <id>Q86VR2</id>
        <label>RETREG3</label>
    </interactant>
    <organismsDiffer>true</organismsDiffer>
    <experiments>3</experiments>
</comment>
<comment type="interaction">
    <interactant intactId="EBI-25475917">
        <id>P0DTD3</id>
    </interactant>
    <interactant intactId="EBI-347996">
        <id>O43765</id>
        <label>SGTA</label>
    </interactant>
    <organismsDiffer>true</organismsDiffer>
    <experiments>3</experiments>
</comment>
<comment type="interaction">
    <interactant intactId="EBI-25475917">
        <id>P0DTD3</id>
    </interactant>
    <interactant intactId="EBI-741480">
        <id>Q9UMX0</id>
        <label>UBQLN1</label>
    </interactant>
    <organismsDiffer>true</organismsDiffer>
    <experiments>3</experiments>
</comment>
<comment type="interaction">
    <interactant intactId="EBI-25475917">
        <id>P0DTD3</id>
    </interactant>
    <interactant intactId="EBI-947187">
        <id>Q9UHD9</id>
        <label>UBQLN2</label>
    </interactant>
    <organismsDiffer>true</organismsDiffer>
    <experiments>4</experiments>
</comment>
<comment type="subcellular location">
    <subcellularLocation>
        <location evidence="1">Membrane</location>
        <topology evidence="1">Single-pass membrane protein</topology>
    </subcellularLocation>
</comment>
<comment type="caution">
    <text evidence="3">Product of a dubious CDS prediction.</text>
</comment>
<evidence type="ECO:0000255" key="1"/>
<evidence type="ECO:0000269" key="2">
    <source>
    </source>
</evidence>
<evidence type="ECO:0000303" key="3">
    <source>
    </source>
</evidence>
<evidence type="ECO:0000305" key="4"/>
<evidence type="ECO:0000305" key="5">
    <source>
    </source>
</evidence>